<proteinExistence type="inferred from homology"/>
<evidence type="ECO:0000255" key="1">
    <source>
        <dbReference type="HAMAP-Rule" id="MF_00815"/>
    </source>
</evidence>
<name>ATPG_NOCFA</name>
<comment type="function">
    <text evidence="1">Produces ATP from ADP in the presence of a proton gradient across the membrane. The gamma chain is believed to be important in regulating ATPase activity and the flow of protons through the CF(0) complex.</text>
</comment>
<comment type="subunit">
    <text evidence="1">F-type ATPases have 2 components, CF(1) - the catalytic core - and CF(0) - the membrane proton channel. CF(1) has five subunits: alpha(3), beta(3), gamma(1), delta(1), epsilon(1). CF(0) has three main subunits: a, b and c.</text>
</comment>
<comment type="subcellular location">
    <subcellularLocation>
        <location evidence="1">Cell membrane</location>
        <topology evidence="1">Peripheral membrane protein</topology>
    </subcellularLocation>
</comment>
<comment type="similarity">
    <text evidence="1">Belongs to the ATPase gamma chain family.</text>
</comment>
<accession>Q5Z0Y2</accession>
<keyword id="KW-0066">ATP synthesis</keyword>
<keyword id="KW-1003">Cell membrane</keyword>
<keyword id="KW-0139">CF(1)</keyword>
<keyword id="KW-0375">Hydrogen ion transport</keyword>
<keyword id="KW-0406">Ion transport</keyword>
<keyword id="KW-0472">Membrane</keyword>
<keyword id="KW-1185">Reference proteome</keyword>
<keyword id="KW-0813">Transport</keyword>
<sequence length="323" mass="35164">MASLRELRSRIRGVNSIKKITKAQELIATSRISKAQARVAAAKPYAEEITKVLGELASASKNLSHPLLTERPNPRRAAVLVITSDSGMCGGYNSNVLKRAEELMTTLRNEGKEPVLYVMGAKGLTYYTFRNRPFVSAWTGFSQQPKYTDASAACRHLVDAFMVGSDGEVPHPNGTGDIAGVDELHIVYTRFVSMLTQTPEVRRLAPIQVSFVDENFDMGEDSFSDSPTAEVQAQYEFEPDADVLLAALLPKYVNTRIYASLLEAAASESAARRTAMKAATDNANELASVLQREANSVRQAQITQEISEIVGGVNALASSSDRD</sequence>
<gene>
    <name evidence="1" type="primary">atpG</name>
    <name type="ordered locus">NFA_10640</name>
</gene>
<dbReference type="EMBL" id="AP006618">
    <property type="protein sequence ID" value="BAD55909.1"/>
    <property type="molecule type" value="Genomic_DNA"/>
</dbReference>
<dbReference type="RefSeq" id="WP_011207594.1">
    <property type="nucleotide sequence ID" value="NC_006361.1"/>
</dbReference>
<dbReference type="SMR" id="Q5Z0Y2"/>
<dbReference type="STRING" id="247156.NFA_10640"/>
<dbReference type="GeneID" id="61131886"/>
<dbReference type="KEGG" id="nfa:NFA_10640"/>
<dbReference type="eggNOG" id="COG0224">
    <property type="taxonomic scope" value="Bacteria"/>
</dbReference>
<dbReference type="HOGENOM" id="CLU_050669_0_0_11"/>
<dbReference type="OrthoDB" id="9812769at2"/>
<dbReference type="Proteomes" id="UP000006820">
    <property type="component" value="Chromosome"/>
</dbReference>
<dbReference type="GO" id="GO:0005886">
    <property type="term" value="C:plasma membrane"/>
    <property type="evidence" value="ECO:0007669"/>
    <property type="project" value="UniProtKB-SubCell"/>
</dbReference>
<dbReference type="GO" id="GO:0045259">
    <property type="term" value="C:proton-transporting ATP synthase complex"/>
    <property type="evidence" value="ECO:0007669"/>
    <property type="project" value="UniProtKB-KW"/>
</dbReference>
<dbReference type="GO" id="GO:0005524">
    <property type="term" value="F:ATP binding"/>
    <property type="evidence" value="ECO:0007669"/>
    <property type="project" value="UniProtKB-UniRule"/>
</dbReference>
<dbReference type="GO" id="GO:0046933">
    <property type="term" value="F:proton-transporting ATP synthase activity, rotational mechanism"/>
    <property type="evidence" value="ECO:0007669"/>
    <property type="project" value="UniProtKB-UniRule"/>
</dbReference>
<dbReference type="GO" id="GO:0042777">
    <property type="term" value="P:proton motive force-driven plasma membrane ATP synthesis"/>
    <property type="evidence" value="ECO:0007669"/>
    <property type="project" value="UniProtKB-UniRule"/>
</dbReference>
<dbReference type="CDD" id="cd12151">
    <property type="entry name" value="F1-ATPase_gamma"/>
    <property type="match status" value="1"/>
</dbReference>
<dbReference type="Gene3D" id="3.40.1380.10">
    <property type="match status" value="1"/>
</dbReference>
<dbReference type="Gene3D" id="1.10.287.80">
    <property type="entry name" value="ATP synthase, gamma subunit, helix hairpin domain"/>
    <property type="match status" value="2"/>
</dbReference>
<dbReference type="HAMAP" id="MF_00815">
    <property type="entry name" value="ATP_synth_gamma_bact"/>
    <property type="match status" value="1"/>
</dbReference>
<dbReference type="InterPro" id="IPR035968">
    <property type="entry name" value="ATP_synth_F1_ATPase_gsu"/>
</dbReference>
<dbReference type="InterPro" id="IPR000131">
    <property type="entry name" value="ATP_synth_F1_gsu"/>
</dbReference>
<dbReference type="NCBIfam" id="TIGR01146">
    <property type="entry name" value="ATPsyn_F1gamma"/>
    <property type="match status" value="1"/>
</dbReference>
<dbReference type="NCBIfam" id="NF004145">
    <property type="entry name" value="PRK05621.1-2"/>
    <property type="match status" value="1"/>
</dbReference>
<dbReference type="PANTHER" id="PTHR11693">
    <property type="entry name" value="ATP SYNTHASE GAMMA CHAIN"/>
    <property type="match status" value="1"/>
</dbReference>
<dbReference type="PANTHER" id="PTHR11693:SF22">
    <property type="entry name" value="ATP SYNTHASE SUBUNIT GAMMA, MITOCHONDRIAL"/>
    <property type="match status" value="1"/>
</dbReference>
<dbReference type="Pfam" id="PF00231">
    <property type="entry name" value="ATP-synt"/>
    <property type="match status" value="1"/>
</dbReference>
<dbReference type="PRINTS" id="PR00126">
    <property type="entry name" value="ATPASEGAMMA"/>
</dbReference>
<dbReference type="SUPFAM" id="SSF52943">
    <property type="entry name" value="ATP synthase (F1-ATPase), gamma subunit"/>
    <property type="match status" value="1"/>
</dbReference>
<feature type="chain" id="PRO_0000073331" description="ATP synthase gamma chain">
    <location>
        <begin position="1"/>
        <end position="323"/>
    </location>
</feature>
<organism>
    <name type="scientific">Nocardia farcinica (strain IFM 10152)</name>
    <dbReference type="NCBI Taxonomy" id="247156"/>
    <lineage>
        <taxon>Bacteria</taxon>
        <taxon>Bacillati</taxon>
        <taxon>Actinomycetota</taxon>
        <taxon>Actinomycetes</taxon>
        <taxon>Mycobacteriales</taxon>
        <taxon>Nocardiaceae</taxon>
        <taxon>Nocardia</taxon>
    </lineage>
</organism>
<reference key="1">
    <citation type="journal article" date="2004" name="Proc. Natl. Acad. Sci. U.S.A.">
        <title>The complete genomic sequence of Nocardia farcinica IFM 10152.</title>
        <authorList>
            <person name="Ishikawa J."/>
            <person name="Yamashita A."/>
            <person name="Mikami Y."/>
            <person name="Hoshino Y."/>
            <person name="Kurita H."/>
            <person name="Hotta K."/>
            <person name="Shiba T."/>
            <person name="Hattori M."/>
        </authorList>
    </citation>
    <scope>NUCLEOTIDE SEQUENCE [LARGE SCALE GENOMIC DNA]</scope>
    <source>
        <strain>IFM 10152</strain>
    </source>
</reference>
<protein>
    <recommendedName>
        <fullName evidence="1">ATP synthase gamma chain</fullName>
    </recommendedName>
    <alternativeName>
        <fullName evidence="1">ATP synthase F1 sector gamma subunit</fullName>
    </alternativeName>
    <alternativeName>
        <fullName evidence="1">F-ATPase gamma subunit</fullName>
    </alternativeName>
</protein>